<accession>P62276</accession>
<accession>P30054</accession>
<accession>Q3SZU7</accession>
<feature type="chain" id="PRO_0000131018" description="Small ribosomal subunit protein uS14">
    <location>
        <begin position="1"/>
        <end position="56"/>
    </location>
</feature>
<feature type="binding site" evidence="1">
    <location>
        <position position="21"/>
    </location>
    <ligand>
        <name>Zn(2+)</name>
        <dbReference type="ChEBI" id="CHEBI:29105"/>
    </ligand>
</feature>
<feature type="binding site" evidence="1">
    <location>
        <position position="24"/>
    </location>
    <ligand>
        <name>Zn(2+)</name>
        <dbReference type="ChEBI" id="CHEBI:29105"/>
    </ligand>
</feature>
<feature type="binding site" evidence="1">
    <location>
        <position position="39"/>
    </location>
    <ligand>
        <name>Zn(2+)</name>
        <dbReference type="ChEBI" id="CHEBI:29105"/>
    </ligand>
</feature>
<feature type="binding site" evidence="1">
    <location>
        <position position="42"/>
    </location>
    <ligand>
        <name>Zn(2+)</name>
        <dbReference type="ChEBI" id="CHEBI:29105"/>
    </ligand>
</feature>
<feature type="modified residue" description="Phosphoserine" evidence="1">
    <location>
        <position position="9"/>
    </location>
</feature>
<feature type="modified residue" description="Omega-N-methylarginine" evidence="1">
    <location>
        <position position="12"/>
    </location>
</feature>
<feature type="modified residue" description="N6-acetyllysine" evidence="1">
    <location>
        <position position="48"/>
    </location>
</feature>
<name>RS29_BOVIN</name>
<comment type="function">
    <text evidence="1">Component of the small ribosomal subunit. The ribosome is a large ribonucleoprotein complex responsible for the synthesis of proteins in the cell.</text>
</comment>
<comment type="cofactor">
    <cofactor evidence="1">
        <name>Zn(2+)</name>
        <dbReference type="ChEBI" id="CHEBI:29105"/>
    </cofactor>
    <text evidence="1">Binds 1 zinc ion per subunit.</text>
</comment>
<comment type="subunit">
    <text evidence="2">Component of the 40S small ribosomal subunit.</text>
</comment>
<comment type="subcellular location">
    <subcellularLocation>
        <location evidence="1">Cytoplasm</location>
        <location evidence="1">Cytosol</location>
    </subcellularLocation>
    <subcellularLocation>
        <location evidence="1">Cytoplasm</location>
    </subcellularLocation>
    <subcellularLocation>
        <location evidence="2">Rough endoplasmic reticulum</location>
    </subcellularLocation>
    <text evidence="1 2">Detected on cytosolic polysomes (By similarity). Detected in ribosomes that are associated with the rough endoplasmic reticulum (By similarity).</text>
</comment>
<comment type="similarity">
    <text evidence="3">Belongs to the universal ribosomal protein uS14 family.</text>
</comment>
<keyword id="KW-0007">Acetylation</keyword>
<keyword id="KW-0963">Cytoplasm</keyword>
<keyword id="KW-0256">Endoplasmic reticulum</keyword>
<keyword id="KW-0479">Metal-binding</keyword>
<keyword id="KW-0488">Methylation</keyword>
<keyword id="KW-0597">Phosphoprotein</keyword>
<keyword id="KW-1185">Reference proteome</keyword>
<keyword id="KW-0687">Ribonucleoprotein</keyword>
<keyword id="KW-0689">Ribosomal protein</keyword>
<keyword id="KW-0862">Zinc</keyword>
<reference key="1">
    <citation type="submission" date="1996-08" db="EMBL/GenBank/DDBJ databases">
        <title>Cloning of the bovine ribosomal protein S29 mRNA.</title>
        <authorList>
            <person name="Gendron N."/>
            <person name="Lemaire S."/>
        </authorList>
    </citation>
    <scope>NUCLEOTIDE SEQUENCE [MRNA]</scope>
    <source>
        <tissue>Adrenal medulla</tissue>
    </source>
</reference>
<reference key="2">
    <citation type="submission" date="2005-08" db="EMBL/GenBank/DDBJ databases">
        <authorList>
            <consortium name="NIH - Mammalian Gene Collection (MGC) project"/>
        </authorList>
    </citation>
    <scope>NUCLEOTIDE SEQUENCE [LARGE SCALE MRNA]</scope>
    <source>
        <strain>Crossbred X Angus</strain>
        <tissue>Ileum</tissue>
    </source>
</reference>
<gene>
    <name type="primary">RPS29</name>
</gene>
<protein>
    <recommendedName>
        <fullName evidence="3">Small ribosomal subunit protein uS14</fullName>
    </recommendedName>
    <alternativeName>
        <fullName>40S ribosomal protein S29</fullName>
    </alternativeName>
</protein>
<organism>
    <name type="scientific">Bos taurus</name>
    <name type="common">Bovine</name>
    <dbReference type="NCBI Taxonomy" id="9913"/>
    <lineage>
        <taxon>Eukaryota</taxon>
        <taxon>Metazoa</taxon>
        <taxon>Chordata</taxon>
        <taxon>Craniata</taxon>
        <taxon>Vertebrata</taxon>
        <taxon>Euteleostomi</taxon>
        <taxon>Mammalia</taxon>
        <taxon>Eutheria</taxon>
        <taxon>Laurasiatheria</taxon>
        <taxon>Artiodactyla</taxon>
        <taxon>Ruminantia</taxon>
        <taxon>Pecora</taxon>
        <taxon>Bovidae</taxon>
        <taxon>Bovinae</taxon>
        <taxon>Bos</taxon>
    </lineage>
</organism>
<proteinExistence type="inferred from homology"/>
<sequence>MGHQQLYWSHPRKFGQGSRSCRVCSNRHGLIRKYGLNMCRQCFRQYAKDIGFIKLD</sequence>
<dbReference type="EMBL" id="U66372">
    <property type="protein sequence ID" value="AAB06757.1"/>
    <property type="molecule type" value="mRNA"/>
</dbReference>
<dbReference type="EMBL" id="BC102702">
    <property type="protein sequence ID" value="AAI02703.1"/>
    <property type="molecule type" value="mRNA"/>
</dbReference>
<dbReference type="RefSeq" id="NP_777229.1">
    <property type="nucleotide sequence ID" value="NM_174804.3"/>
</dbReference>
<dbReference type="SMR" id="P62276"/>
<dbReference type="FunCoup" id="P62276">
    <property type="interactions" value="1984"/>
</dbReference>
<dbReference type="STRING" id="9913.ENSBTAP00000014734"/>
<dbReference type="PaxDb" id="9913-ENSBTAP00000014734"/>
<dbReference type="PeptideAtlas" id="P62276"/>
<dbReference type="Ensembl" id="ENSBTAT00000077396.1">
    <property type="protein sequence ID" value="ENSBTAP00000061344.1"/>
    <property type="gene ID" value="ENSBTAG00000052337.2"/>
</dbReference>
<dbReference type="GeneID" id="286884"/>
<dbReference type="KEGG" id="bta:286884"/>
<dbReference type="CTD" id="6235"/>
<dbReference type="VEuPathDB" id="HostDB:ENSBTAG00000052337"/>
<dbReference type="eggNOG" id="KOG3506">
    <property type="taxonomic scope" value="Eukaryota"/>
</dbReference>
<dbReference type="GeneTree" id="ENSGT00940000154720"/>
<dbReference type="InParanoid" id="P62276"/>
<dbReference type="OMA" id="HCFREIA"/>
<dbReference type="OrthoDB" id="9688859at2759"/>
<dbReference type="Reactome" id="R-BTA-156827">
    <property type="pathway name" value="L13a-mediated translational silencing of Ceruloplasmin expression"/>
</dbReference>
<dbReference type="Reactome" id="R-BTA-1799339">
    <property type="pathway name" value="SRP-dependent cotranslational protein targeting to membrane"/>
</dbReference>
<dbReference type="Reactome" id="R-BTA-6791226">
    <property type="pathway name" value="Major pathway of rRNA processing in the nucleolus and cytosol"/>
</dbReference>
<dbReference type="Reactome" id="R-BTA-72649">
    <property type="pathway name" value="Translation initiation complex formation"/>
</dbReference>
<dbReference type="Reactome" id="R-BTA-72689">
    <property type="pathway name" value="Formation of a pool of free 40S subunits"/>
</dbReference>
<dbReference type="Reactome" id="R-BTA-72695">
    <property type="pathway name" value="Formation of the ternary complex, and subsequently, the 43S complex"/>
</dbReference>
<dbReference type="Reactome" id="R-BTA-72702">
    <property type="pathway name" value="Ribosomal scanning and start codon recognition"/>
</dbReference>
<dbReference type="Reactome" id="R-BTA-72706">
    <property type="pathway name" value="GTP hydrolysis and joining of the 60S ribosomal subunit"/>
</dbReference>
<dbReference type="Reactome" id="R-BTA-975956">
    <property type="pathway name" value="Nonsense Mediated Decay (NMD) independent of the Exon Junction Complex (EJC)"/>
</dbReference>
<dbReference type="Reactome" id="R-BTA-975957">
    <property type="pathway name" value="Nonsense Mediated Decay (NMD) enhanced by the Exon Junction Complex (EJC)"/>
</dbReference>
<dbReference type="Proteomes" id="UP000009136">
    <property type="component" value="Chromosome 10"/>
</dbReference>
<dbReference type="Bgee" id="ENSBTAG00000052337">
    <property type="expression patterns" value="Expressed in mesenteric lymph node and 104 other cell types or tissues"/>
</dbReference>
<dbReference type="GO" id="GO:0098556">
    <property type="term" value="C:cytoplasmic side of rough endoplasmic reticulum membrane"/>
    <property type="evidence" value="ECO:0000250"/>
    <property type="project" value="UniProtKB"/>
</dbReference>
<dbReference type="GO" id="GO:0022627">
    <property type="term" value="C:cytosolic small ribosomal subunit"/>
    <property type="evidence" value="ECO:0000250"/>
    <property type="project" value="UniProtKB"/>
</dbReference>
<dbReference type="GO" id="GO:0005840">
    <property type="term" value="C:ribosome"/>
    <property type="evidence" value="ECO:0000250"/>
    <property type="project" value="UniProtKB"/>
</dbReference>
<dbReference type="GO" id="GO:0003735">
    <property type="term" value="F:structural constituent of ribosome"/>
    <property type="evidence" value="ECO:0000318"/>
    <property type="project" value="GO_Central"/>
</dbReference>
<dbReference type="GO" id="GO:0008270">
    <property type="term" value="F:zinc ion binding"/>
    <property type="evidence" value="ECO:0000250"/>
    <property type="project" value="UniProtKB"/>
</dbReference>
<dbReference type="GO" id="GO:0002181">
    <property type="term" value="P:cytoplasmic translation"/>
    <property type="evidence" value="ECO:0000250"/>
    <property type="project" value="UniProtKB"/>
</dbReference>
<dbReference type="FunFam" id="4.10.830.10:FF:000002">
    <property type="entry name" value="40S ribosomal protein S29"/>
    <property type="match status" value="1"/>
</dbReference>
<dbReference type="Gene3D" id="4.10.830.10">
    <property type="entry name" value="30s Ribosomal Protein S14, Chain N"/>
    <property type="match status" value="1"/>
</dbReference>
<dbReference type="InterPro" id="IPR001209">
    <property type="entry name" value="Ribosomal_uS14"/>
</dbReference>
<dbReference type="InterPro" id="IPR018271">
    <property type="entry name" value="Ribosomal_uS14_CS"/>
</dbReference>
<dbReference type="InterPro" id="IPR039744">
    <property type="entry name" value="RIbosomal_uS14_euk_arc"/>
</dbReference>
<dbReference type="InterPro" id="IPR043140">
    <property type="entry name" value="Ribosomal_uS14_sf"/>
</dbReference>
<dbReference type="NCBIfam" id="NF004424">
    <property type="entry name" value="PRK05766.1"/>
    <property type="match status" value="1"/>
</dbReference>
<dbReference type="PANTHER" id="PTHR12010">
    <property type="entry name" value="40S RIBOSOMAL PROTEIN S29"/>
    <property type="match status" value="1"/>
</dbReference>
<dbReference type="PANTHER" id="PTHR12010:SF26">
    <property type="entry name" value="SMALL RIBOSOMAL SUBUNIT PROTEIN US14"/>
    <property type="match status" value="1"/>
</dbReference>
<dbReference type="Pfam" id="PF00253">
    <property type="entry name" value="Ribosomal_S14"/>
    <property type="match status" value="1"/>
</dbReference>
<dbReference type="PROSITE" id="PS00527">
    <property type="entry name" value="RIBOSOMAL_S14"/>
    <property type="match status" value="1"/>
</dbReference>
<evidence type="ECO:0000250" key="1">
    <source>
        <dbReference type="UniProtKB" id="P62273"/>
    </source>
</evidence>
<evidence type="ECO:0000250" key="2">
    <source>
        <dbReference type="UniProtKB" id="Q6QAP6"/>
    </source>
</evidence>
<evidence type="ECO:0000305" key="3"/>